<accession>P56301</accession>
<proteinExistence type="inferred from homology"/>
<keyword id="KW-0004">4Fe-4S</keyword>
<keyword id="KW-0150">Chloroplast</keyword>
<keyword id="KW-0249">Electron transport</keyword>
<keyword id="KW-0408">Iron</keyword>
<keyword id="KW-0411">Iron-sulfur</keyword>
<keyword id="KW-0472">Membrane</keyword>
<keyword id="KW-0479">Metal-binding</keyword>
<keyword id="KW-0560">Oxidoreductase</keyword>
<keyword id="KW-0602">Photosynthesis</keyword>
<keyword id="KW-0603">Photosystem I</keyword>
<keyword id="KW-0934">Plastid</keyword>
<keyword id="KW-0677">Repeat</keyword>
<keyword id="KW-0793">Thylakoid</keyword>
<keyword id="KW-0813">Transport</keyword>
<evidence type="ECO:0000250" key="1"/>
<evidence type="ECO:0000255" key="2">
    <source>
        <dbReference type="HAMAP-Rule" id="MF_01303"/>
    </source>
</evidence>
<organism>
    <name type="scientific">Chlorella vulgaris</name>
    <name type="common">Green alga</name>
    <dbReference type="NCBI Taxonomy" id="3077"/>
    <lineage>
        <taxon>Eukaryota</taxon>
        <taxon>Viridiplantae</taxon>
        <taxon>Chlorophyta</taxon>
        <taxon>core chlorophytes</taxon>
        <taxon>Trebouxiophyceae</taxon>
        <taxon>Chlorellales</taxon>
        <taxon>Chlorellaceae</taxon>
        <taxon>Chlorella clade</taxon>
        <taxon>Chlorella</taxon>
    </lineage>
</organism>
<geneLocation type="chloroplast"/>
<sequence length="81" mass="8818">MSHTVKIYDTCIGCTQCVRACPTDVLEMVPWDGCKASQIASAPRTEDCVGCKRCESACPTDFLSVRVYLGSETTRSMGLAY</sequence>
<feature type="initiator methionine" description="Removed" evidence="1">
    <location>
        <position position="1"/>
    </location>
</feature>
<feature type="chain" id="PRO_0000061975" description="Photosystem I iron-sulfur center">
    <location>
        <begin position="2"/>
        <end position="81"/>
    </location>
</feature>
<feature type="domain" description="4Fe-4S ferredoxin-type 1" evidence="2">
    <location>
        <begin position="2"/>
        <end position="31"/>
    </location>
</feature>
<feature type="domain" description="4Fe-4S ferredoxin-type 2" evidence="2">
    <location>
        <begin position="39"/>
        <end position="68"/>
    </location>
</feature>
<feature type="binding site" evidence="2">
    <location>
        <position position="11"/>
    </location>
    <ligand>
        <name>[4Fe-4S] cluster</name>
        <dbReference type="ChEBI" id="CHEBI:49883"/>
        <label>1</label>
    </ligand>
</feature>
<feature type="binding site" evidence="2">
    <location>
        <position position="14"/>
    </location>
    <ligand>
        <name>[4Fe-4S] cluster</name>
        <dbReference type="ChEBI" id="CHEBI:49883"/>
        <label>1</label>
    </ligand>
</feature>
<feature type="binding site" evidence="2">
    <location>
        <position position="17"/>
    </location>
    <ligand>
        <name>[4Fe-4S] cluster</name>
        <dbReference type="ChEBI" id="CHEBI:49883"/>
        <label>1</label>
    </ligand>
</feature>
<feature type="binding site" evidence="2">
    <location>
        <position position="21"/>
    </location>
    <ligand>
        <name>[4Fe-4S] cluster</name>
        <dbReference type="ChEBI" id="CHEBI:49883"/>
        <label>2</label>
    </ligand>
</feature>
<feature type="binding site" evidence="2">
    <location>
        <position position="48"/>
    </location>
    <ligand>
        <name>[4Fe-4S] cluster</name>
        <dbReference type="ChEBI" id="CHEBI:49883"/>
        <label>2</label>
    </ligand>
</feature>
<feature type="binding site" evidence="2">
    <location>
        <position position="51"/>
    </location>
    <ligand>
        <name>[4Fe-4S] cluster</name>
        <dbReference type="ChEBI" id="CHEBI:49883"/>
        <label>2</label>
    </ligand>
</feature>
<feature type="binding site" evidence="2">
    <location>
        <position position="54"/>
    </location>
    <ligand>
        <name>[4Fe-4S] cluster</name>
        <dbReference type="ChEBI" id="CHEBI:49883"/>
        <label>2</label>
    </ligand>
</feature>
<feature type="binding site" evidence="2">
    <location>
        <position position="58"/>
    </location>
    <ligand>
        <name>[4Fe-4S] cluster</name>
        <dbReference type="ChEBI" id="CHEBI:49883"/>
        <label>1</label>
    </ligand>
</feature>
<gene>
    <name evidence="2" type="primary">psaC</name>
</gene>
<reference key="1">
    <citation type="journal article" date="1997" name="Proc. Natl. Acad. Sci. U.S.A.">
        <title>Complete nucleotide sequence of the chloroplast genome from the green alga Chlorella vulgaris: the existence of genes possibly involved in chloroplast division.</title>
        <authorList>
            <person name="Wakasugi T."/>
            <person name="Nagai T."/>
            <person name="Kapoor M."/>
            <person name="Sugita M."/>
            <person name="Ito M."/>
            <person name="Ito S."/>
            <person name="Tsudzuki J."/>
            <person name="Nakashima K."/>
            <person name="Tsudzuki T."/>
            <person name="Suzuki Y."/>
            <person name="Hamada A."/>
            <person name="Ohta T."/>
            <person name="Inamura A."/>
            <person name="Yoshinaga K."/>
            <person name="Sugiura M."/>
        </authorList>
    </citation>
    <scope>NUCLEOTIDE SEQUENCE [LARGE SCALE GENOMIC DNA]</scope>
    <source>
        <strain>IAM C-27 / Tamiya</strain>
    </source>
</reference>
<comment type="function">
    <text evidence="2">Apoprotein for the two 4Fe-4S centers FA and FB of photosystem I (PSI); essential for photochemical activity. FB is the terminal electron acceptor of PSI, donating electrons to ferredoxin. The C-terminus interacts with PsaA/B/D and helps assemble the protein into the PSI complex. Required for binding of PsaD and PsaE to PSI. PSI is a plastocyanin/cytochrome c6-ferredoxin oxidoreductase, converting photonic excitation into a charge separation, which transfers an electron from the donor P700 chlorophyll pair to the spectroscopically characterized acceptors A0, A1, FX, FA and FB in turn.</text>
</comment>
<comment type="catalytic activity">
    <reaction evidence="2">
        <text>reduced [plastocyanin] + hnu + oxidized [2Fe-2S]-[ferredoxin] = oxidized [plastocyanin] + reduced [2Fe-2S]-[ferredoxin]</text>
        <dbReference type="Rhea" id="RHEA:30407"/>
        <dbReference type="Rhea" id="RHEA-COMP:10000"/>
        <dbReference type="Rhea" id="RHEA-COMP:10001"/>
        <dbReference type="Rhea" id="RHEA-COMP:10039"/>
        <dbReference type="Rhea" id="RHEA-COMP:10040"/>
        <dbReference type="ChEBI" id="CHEBI:29036"/>
        <dbReference type="ChEBI" id="CHEBI:30212"/>
        <dbReference type="ChEBI" id="CHEBI:33737"/>
        <dbReference type="ChEBI" id="CHEBI:33738"/>
        <dbReference type="ChEBI" id="CHEBI:49552"/>
        <dbReference type="EC" id="1.97.1.12"/>
    </reaction>
</comment>
<comment type="cofactor">
    <cofactor evidence="2">
        <name>[4Fe-4S] cluster</name>
        <dbReference type="ChEBI" id="CHEBI:49883"/>
    </cofactor>
    <text evidence="2">Binds 2 [4Fe-4S] clusters. Cluster 2 is most probably the spectroscopically characterized electron acceptor FA and cluster 1 is most probably FB.</text>
</comment>
<comment type="subunit">
    <text evidence="2">The eukaryotic PSI reaction center is composed of at least 11 subunits.</text>
</comment>
<comment type="subcellular location">
    <subcellularLocation>
        <location evidence="2">Plastid</location>
        <location evidence="2">Chloroplast thylakoid membrane</location>
        <topology evidence="2">Peripheral membrane protein</topology>
        <orientation evidence="2">Stromal side</orientation>
    </subcellularLocation>
</comment>
<protein>
    <recommendedName>
        <fullName evidence="2">Photosystem I iron-sulfur center</fullName>
        <ecNumber evidence="2">1.97.1.12</ecNumber>
    </recommendedName>
    <alternativeName>
        <fullName evidence="2">9 kDa polypeptide</fullName>
    </alternativeName>
    <alternativeName>
        <fullName evidence="2">PSI-C</fullName>
    </alternativeName>
    <alternativeName>
        <fullName evidence="2">Photosystem I subunit VII</fullName>
    </alternativeName>
    <alternativeName>
        <fullName evidence="2">PsaC</fullName>
    </alternativeName>
</protein>
<dbReference type="EC" id="1.97.1.12" evidence="2"/>
<dbReference type="EMBL" id="AB001684">
    <property type="protein sequence ID" value="BAA57846.1"/>
    <property type="molecule type" value="Genomic_DNA"/>
</dbReference>
<dbReference type="PIR" id="T07199">
    <property type="entry name" value="T07199"/>
</dbReference>
<dbReference type="RefSeq" id="NP_045771.1">
    <property type="nucleotide sequence ID" value="NC_001865.1"/>
</dbReference>
<dbReference type="SMR" id="P56301"/>
<dbReference type="GeneID" id="809124"/>
<dbReference type="OrthoDB" id="9at2759"/>
<dbReference type="GO" id="GO:0009535">
    <property type="term" value="C:chloroplast thylakoid membrane"/>
    <property type="evidence" value="ECO:0007669"/>
    <property type="project" value="UniProtKB-SubCell"/>
</dbReference>
<dbReference type="GO" id="GO:0009522">
    <property type="term" value="C:photosystem I"/>
    <property type="evidence" value="ECO:0007669"/>
    <property type="project" value="UniProtKB-KW"/>
</dbReference>
<dbReference type="GO" id="GO:0051539">
    <property type="term" value="F:4 iron, 4 sulfur cluster binding"/>
    <property type="evidence" value="ECO:0007669"/>
    <property type="project" value="UniProtKB-KW"/>
</dbReference>
<dbReference type="GO" id="GO:0009055">
    <property type="term" value="F:electron transfer activity"/>
    <property type="evidence" value="ECO:0007669"/>
    <property type="project" value="UniProtKB-UniRule"/>
</dbReference>
<dbReference type="GO" id="GO:0046872">
    <property type="term" value="F:metal ion binding"/>
    <property type="evidence" value="ECO:0007669"/>
    <property type="project" value="UniProtKB-KW"/>
</dbReference>
<dbReference type="GO" id="GO:0016491">
    <property type="term" value="F:oxidoreductase activity"/>
    <property type="evidence" value="ECO:0007669"/>
    <property type="project" value="UniProtKB-KW"/>
</dbReference>
<dbReference type="GO" id="GO:0009773">
    <property type="term" value="P:photosynthetic electron transport in photosystem I"/>
    <property type="evidence" value="ECO:0007669"/>
    <property type="project" value="InterPro"/>
</dbReference>
<dbReference type="FunFam" id="3.30.70.20:FF:000001">
    <property type="entry name" value="Photosystem I iron-sulfur center"/>
    <property type="match status" value="1"/>
</dbReference>
<dbReference type="Gene3D" id="3.30.70.20">
    <property type="match status" value="1"/>
</dbReference>
<dbReference type="HAMAP" id="MF_01303">
    <property type="entry name" value="PSI_PsaC"/>
    <property type="match status" value="1"/>
</dbReference>
<dbReference type="InterPro" id="IPR017896">
    <property type="entry name" value="4Fe4S_Fe-S-bd"/>
</dbReference>
<dbReference type="InterPro" id="IPR017900">
    <property type="entry name" value="4Fe4S_Fe_S_CS"/>
</dbReference>
<dbReference type="InterPro" id="IPR050157">
    <property type="entry name" value="PSI_iron-sulfur_center"/>
</dbReference>
<dbReference type="InterPro" id="IPR017491">
    <property type="entry name" value="PSI_PsaC"/>
</dbReference>
<dbReference type="NCBIfam" id="TIGR03048">
    <property type="entry name" value="PS_I_psaC"/>
    <property type="match status" value="1"/>
</dbReference>
<dbReference type="PANTHER" id="PTHR24960:SF79">
    <property type="entry name" value="PHOTOSYSTEM I IRON-SULFUR CENTER"/>
    <property type="match status" value="1"/>
</dbReference>
<dbReference type="PANTHER" id="PTHR24960">
    <property type="entry name" value="PHOTOSYSTEM I IRON-SULFUR CENTER-RELATED"/>
    <property type="match status" value="1"/>
</dbReference>
<dbReference type="Pfam" id="PF12838">
    <property type="entry name" value="Fer4_7"/>
    <property type="match status" value="1"/>
</dbReference>
<dbReference type="SUPFAM" id="SSF54862">
    <property type="entry name" value="4Fe-4S ferredoxins"/>
    <property type="match status" value="1"/>
</dbReference>
<dbReference type="PROSITE" id="PS00198">
    <property type="entry name" value="4FE4S_FER_1"/>
    <property type="match status" value="2"/>
</dbReference>
<dbReference type="PROSITE" id="PS51379">
    <property type="entry name" value="4FE4S_FER_2"/>
    <property type="match status" value="2"/>
</dbReference>
<name>PSAC_CHLVU</name>